<feature type="chain" id="PRO_0000410200" description="Peptidyl-prolyl cis-trans isomerase D">
    <location>
        <begin position="1"/>
        <end position="375"/>
    </location>
</feature>
<feature type="domain" description="PPIase cyclophilin-type" evidence="2">
    <location>
        <begin position="7"/>
        <end position="169"/>
    </location>
</feature>
<feature type="repeat" description="TPR 1">
    <location>
        <begin position="217"/>
        <end position="250"/>
    </location>
</feature>
<feature type="repeat" description="TPR 2">
    <location>
        <begin position="270"/>
        <end position="307"/>
    </location>
</feature>
<feature type="repeat" description="TPR 3">
    <location>
        <begin position="312"/>
        <end position="345"/>
    </location>
</feature>
<accession>P0CP81</accession>
<accession>Q55QB1</accession>
<accession>Q5KFV5</accession>
<evidence type="ECO:0000250" key="1"/>
<evidence type="ECO:0000255" key="2">
    <source>
        <dbReference type="PROSITE-ProRule" id="PRU00156"/>
    </source>
</evidence>
<evidence type="ECO:0000305" key="3"/>
<name>PPID_CRYNB</name>
<sequence>MSNTIAYFDITIANEPAGRLTFELFDDVVPKTANNFKHLCIGDKTNEAGVKLAYAGSSFHRCIKGFMLQGGDFTRGDGTGGESIYGEKFEDENFELKHDKPMLLSMANAGPGTNGSQFFITTVPTPHLDGKHVVFGRVIYNRSLVRRIENIPTTSDRPDQEVTISSAGVLSPDEFAQLEAERQAKQAGSDGGDIWEDWPQDEEGVDAEKPEEALVVAGKLKEVGTKEFKAGNFAVALDKYQKALRYLDVHPVLPNDSPAELVESFRSLRLPLLTNAALCALKLPASPNTSSLVVSLTSRALTLPNLSASEKGKALYRRAQAYVLKKDDEAAEKDLKGALECVPGDAGVIKLLKDVEAKRKARREKERQAFAKMFG</sequence>
<organism>
    <name type="scientific">Cryptococcus neoformans var. neoformans serotype D (strain B-3501A)</name>
    <name type="common">Filobasidiella neoformans</name>
    <dbReference type="NCBI Taxonomy" id="283643"/>
    <lineage>
        <taxon>Eukaryota</taxon>
        <taxon>Fungi</taxon>
        <taxon>Dikarya</taxon>
        <taxon>Basidiomycota</taxon>
        <taxon>Agaricomycotina</taxon>
        <taxon>Tremellomycetes</taxon>
        <taxon>Tremellales</taxon>
        <taxon>Cryptococcaceae</taxon>
        <taxon>Cryptococcus</taxon>
        <taxon>Cryptococcus neoformans species complex</taxon>
    </lineage>
</organism>
<keyword id="KW-0963">Cytoplasm</keyword>
<keyword id="KW-0413">Isomerase</keyword>
<keyword id="KW-0677">Repeat</keyword>
<keyword id="KW-0697">Rotamase</keyword>
<keyword id="KW-0802">TPR repeat</keyword>
<dbReference type="EC" id="5.2.1.8"/>
<dbReference type="EMBL" id="AAEY01000032">
    <property type="protein sequence ID" value="EAL20100.1"/>
    <property type="molecule type" value="Genomic_DNA"/>
</dbReference>
<dbReference type="RefSeq" id="XP_774747.1">
    <property type="nucleotide sequence ID" value="XM_769654.1"/>
</dbReference>
<dbReference type="SMR" id="P0CP81"/>
<dbReference type="GeneID" id="4936978"/>
<dbReference type="KEGG" id="cnb:CNBF4260"/>
<dbReference type="VEuPathDB" id="FungiDB:CNBF4260"/>
<dbReference type="HOGENOM" id="CLU_012062_37_0_1"/>
<dbReference type="OrthoDB" id="6320at5206"/>
<dbReference type="GO" id="GO:0005737">
    <property type="term" value="C:cytoplasm"/>
    <property type="evidence" value="ECO:0007669"/>
    <property type="project" value="UniProtKB-SubCell"/>
</dbReference>
<dbReference type="GO" id="GO:0043231">
    <property type="term" value="C:intracellular membrane-bounded organelle"/>
    <property type="evidence" value="ECO:0007669"/>
    <property type="project" value="TreeGrafter"/>
</dbReference>
<dbReference type="GO" id="GO:0016018">
    <property type="term" value="F:cyclosporin A binding"/>
    <property type="evidence" value="ECO:0007669"/>
    <property type="project" value="TreeGrafter"/>
</dbReference>
<dbReference type="GO" id="GO:0003755">
    <property type="term" value="F:peptidyl-prolyl cis-trans isomerase activity"/>
    <property type="evidence" value="ECO:0007669"/>
    <property type="project" value="UniProtKB-KW"/>
</dbReference>
<dbReference type="GO" id="GO:0006457">
    <property type="term" value="P:protein folding"/>
    <property type="evidence" value="ECO:0007669"/>
    <property type="project" value="TreeGrafter"/>
</dbReference>
<dbReference type="CDD" id="cd01926">
    <property type="entry name" value="cyclophilin_ABH_like"/>
    <property type="match status" value="1"/>
</dbReference>
<dbReference type="FunFam" id="2.40.100.10:FF:000068">
    <property type="entry name" value="Peptidyl-prolyl cis-trans isomerase D"/>
    <property type="match status" value="1"/>
</dbReference>
<dbReference type="FunFam" id="1.25.40.10:FF:000029">
    <property type="entry name" value="peptidyl-prolyl cis-trans isomerase D"/>
    <property type="match status" value="1"/>
</dbReference>
<dbReference type="Gene3D" id="2.40.100.10">
    <property type="entry name" value="Cyclophilin-like"/>
    <property type="match status" value="1"/>
</dbReference>
<dbReference type="Gene3D" id="1.25.40.10">
    <property type="entry name" value="Tetratricopeptide repeat domain"/>
    <property type="match status" value="1"/>
</dbReference>
<dbReference type="InterPro" id="IPR029000">
    <property type="entry name" value="Cyclophilin-like_dom_sf"/>
</dbReference>
<dbReference type="InterPro" id="IPR002130">
    <property type="entry name" value="Cyclophilin-type_PPIase_dom"/>
</dbReference>
<dbReference type="InterPro" id="IPR011990">
    <property type="entry name" value="TPR-like_helical_dom_sf"/>
</dbReference>
<dbReference type="PANTHER" id="PTHR11071">
    <property type="entry name" value="PEPTIDYL-PROLYL CIS-TRANS ISOMERASE"/>
    <property type="match status" value="1"/>
</dbReference>
<dbReference type="PANTHER" id="PTHR11071:SF561">
    <property type="entry name" value="PEPTIDYL-PROLYL CIS-TRANS ISOMERASE D-RELATED"/>
    <property type="match status" value="1"/>
</dbReference>
<dbReference type="Pfam" id="PF00160">
    <property type="entry name" value="Pro_isomerase"/>
    <property type="match status" value="1"/>
</dbReference>
<dbReference type="PRINTS" id="PR00153">
    <property type="entry name" value="CSAPPISMRASE"/>
</dbReference>
<dbReference type="SUPFAM" id="SSF50891">
    <property type="entry name" value="Cyclophilin-like"/>
    <property type="match status" value="1"/>
</dbReference>
<dbReference type="SUPFAM" id="SSF48452">
    <property type="entry name" value="TPR-like"/>
    <property type="match status" value="1"/>
</dbReference>
<dbReference type="PROSITE" id="PS50072">
    <property type="entry name" value="CSA_PPIASE_2"/>
    <property type="match status" value="1"/>
</dbReference>
<comment type="function">
    <text evidence="1">PPIases accelerate the folding of proteins. It catalyzes the cis-trans isomerization of proline imidic peptide bonds in oligopeptides (By similarity).</text>
</comment>
<comment type="catalytic activity">
    <reaction>
        <text>[protein]-peptidylproline (omega=180) = [protein]-peptidylproline (omega=0)</text>
        <dbReference type="Rhea" id="RHEA:16237"/>
        <dbReference type="Rhea" id="RHEA-COMP:10747"/>
        <dbReference type="Rhea" id="RHEA-COMP:10748"/>
        <dbReference type="ChEBI" id="CHEBI:83833"/>
        <dbReference type="ChEBI" id="CHEBI:83834"/>
        <dbReference type="EC" id="5.2.1.8"/>
    </reaction>
</comment>
<comment type="subcellular location">
    <subcellularLocation>
        <location evidence="1">Cytoplasm</location>
    </subcellularLocation>
</comment>
<comment type="similarity">
    <text evidence="3">Belongs to the cyclophilin-type PPIase family. PPIase D subfamily.</text>
</comment>
<proteinExistence type="inferred from homology"/>
<protein>
    <recommendedName>
        <fullName>Peptidyl-prolyl cis-trans isomerase D</fullName>
        <shortName>PPIase D</shortName>
        <ecNumber>5.2.1.8</ecNumber>
    </recommendedName>
    <alternativeName>
        <fullName>Rotamase D</fullName>
    </alternativeName>
</protein>
<gene>
    <name type="primary">CPR6</name>
    <name type="ordered locus">CNBF4260</name>
</gene>
<reference key="1">
    <citation type="journal article" date="2005" name="Science">
        <title>The genome of the basidiomycetous yeast and human pathogen Cryptococcus neoformans.</title>
        <authorList>
            <person name="Loftus B.J."/>
            <person name="Fung E."/>
            <person name="Roncaglia P."/>
            <person name="Rowley D."/>
            <person name="Amedeo P."/>
            <person name="Bruno D."/>
            <person name="Vamathevan J."/>
            <person name="Miranda M."/>
            <person name="Anderson I.J."/>
            <person name="Fraser J.A."/>
            <person name="Allen J.E."/>
            <person name="Bosdet I.E."/>
            <person name="Brent M.R."/>
            <person name="Chiu R."/>
            <person name="Doering T.L."/>
            <person name="Donlin M.J."/>
            <person name="D'Souza C.A."/>
            <person name="Fox D.S."/>
            <person name="Grinberg V."/>
            <person name="Fu J."/>
            <person name="Fukushima M."/>
            <person name="Haas B.J."/>
            <person name="Huang J.C."/>
            <person name="Janbon G."/>
            <person name="Jones S.J.M."/>
            <person name="Koo H.L."/>
            <person name="Krzywinski M.I."/>
            <person name="Kwon-Chung K.J."/>
            <person name="Lengeler K.B."/>
            <person name="Maiti R."/>
            <person name="Marra M.A."/>
            <person name="Marra R.E."/>
            <person name="Mathewson C.A."/>
            <person name="Mitchell T.G."/>
            <person name="Pertea M."/>
            <person name="Riggs F.R."/>
            <person name="Salzberg S.L."/>
            <person name="Schein J.E."/>
            <person name="Shvartsbeyn A."/>
            <person name="Shin H."/>
            <person name="Shumway M."/>
            <person name="Specht C.A."/>
            <person name="Suh B.B."/>
            <person name="Tenney A."/>
            <person name="Utterback T.R."/>
            <person name="Wickes B.L."/>
            <person name="Wortman J.R."/>
            <person name="Wye N.H."/>
            <person name="Kronstad J.W."/>
            <person name="Lodge J.K."/>
            <person name="Heitman J."/>
            <person name="Davis R.W."/>
            <person name="Fraser C.M."/>
            <person name="Hyman R.W."/>
        </authorList>
    </citation>
    <scope>NUCLEOTIDE SEQUENCE [LARGE SCALE GENOMIC DNA]</scope>
    <source>
        <strain>B-3501A</strain>
    </source>
</reference>